<comment type="function">
    <text evidence="1">Catalyzes the base-exchange of a guanine (G) residue with the queuine precursor 7-aminomethyl-7-deazaguanine (PreQ1) at position 34 (anticodon wobble position) in tRNAs with GU(N) anticodons (tRNA-Asp, -Asn, -His and -Tyr). Catalysis occurs through a double-displacement mechanism. The nucleophile active site attacks the C1' of nucleotide 34 to detach the guanine base from the RNA, forming a covalent enzyme-RNA intermediate. The proton acceptor active site deprotonates the incoming PreQ1, allowing a nucleophilic attack on the C1' of the ribose to form the product. After dissociation, two additional enzymatic reactions on the tRNA convert PreQ1 to queuine (Q), resulting in the hypermodified nucleoside queuosine (7-(((4,5-cis-dihydroxy-2-cyclopenten-1-yl)amino)methyl)-7-deazaguanosine).</text>
</comment>
<comment type="catalytic activity">
    <reaction evidence="1">
        <text>7-aminomethyl-7-carbaguanine + guanosine(34) in tRNA = 7-aminomethyl-7-carbaguanosine(34) in tRNA + guanine</text>
        <dbReference type="Rhea" id="RHEA:24104"/>
        <dbReference type="Rhea" id="RHEA-COMP:10341"/>
        <dbReference type="Rhea" id="RHEA-COMP:10342"/>
        <dbReference type="ChEBI" id="CHEBI:16235"/>
        <dbReference type="ChEBI" id="CHEBI:58703"/>
        <dbReference type="ChEBI" id="CHEBI:74269"/>
        <dbReference type="ChEBI" id="CHEBI:82833"/>
        <dbReference type="EC" id="2.4.2.29"/>
    </reaction>
</comment>
<comment type="cofactor">
    <cofactor evidence="1">
        <name>Zn(2+)</name>
        <dbReference type="ChEBI" id="CHEBI:29105"/>
    </cofactor>
    <text evidence="1">Binds 1 zinc ion per subunit.</text>
</comment>
<comment type="pathway">
    <text evidence="1">tRNA modification; tRNA-queuosine biosynthesis.</text>
</comment>
<comment type="subunit">
    <text evidence="1">Homodimer. Within each dimer, one monomer is responsible for RNA recognition and catalysis, while the other monomer binds to the replacement base PreQ1.</text>
</comment>
<comment type="similarity">
    <text evidence="1">Belongs to the queuine tRNA-ribosyltransferase family.</text>
</comment>
<reference key="1">
    <citation type="journal article" date="2006" name="PLoS Biol.">
        <title>The genome of deep-sea vent chemolithoautotroph Thiomicrospira crunogena XCL-2.</title>
        <authorList>
            <person name="Scott K.M."/>
            <person name="Sievert S.M."/>
            <person name="Abril F.N."/>
            <person name="Ball L.A."/>
            <person name="Barrett C.J."/>
            <person name="Blake R.A."/>
            <person name="Boller A.J."/>
            <person name="Chain P.S.G."/>
            <person name="Clark J.A."/>
            <person name="Davis C.R."/>
            <person name="Detter C."/>
            <person name="Do K.F."/>
            <person name="Dobrinski K.P."/>
            <person name="Faza B.I."/>
            <person name="Fitzpatrick K.A."/>
            <person name="Freyermuth S.K."/>
            <person name="Harmer T.L."/>
            <person name="Hauser L.J."/>
            <person name="Huegler M."/>
            <person name="Kerfeld C.A."/>
            <person name="Klotz M.G."/>
            <person name="Kong W.W."/>
            <person name="Land M."/>
            <person name="Lapidus A."/>
            <person name="Larimer F.W."/>
            <person name="Longo D.L."/>
            <person name="Lucas S."/>
            <person name="Malfatti S.A."/>
            <person name="Massey S.E."/>
            <person name="Martin D.D."/>
            <person name="McCuddin Z."/>
            <person name="Meyer F."/>
            <person name="Moore J.L."/>
            <person name="Ocampo L.H. Jr."/>
            <person name="Paul J.H."/>
            <person name="Paulsen I.T."/>
            <person name="Reep D.K."/>
            <person name="Ren Q."/>
            <person name="Ross R.L."/>
            <person name="Sato P.Y."/>
            <person name="Thomas P."/>
            <person name="Tinkham L.E."/>
            <person name="Zeruth G.T."/>
        </authorList>
    </citation>
    <scope>NUCLEOTIDE SEQUENCE [LARGE SCALE GENOMIC DNA]</scope>
    <source>
        <strain>DSM 25203 / XCL-2</strain>
    </source>
</reference>
<keyword id="KW-0328">Glycosyltransferase</keyword>
<keyword id="KW-0479">Metal-binding</keyword>
<keyword id="KW-0671">Queuosine biosynthesis</keyword>
<keyword id="KW-0808">Transferase</keyword>
<keyword id="KW-0819">tRNA processing</keyword>
<keyword id="KW-0862">Zinc</keyword>
<protein>
    <recommendedName>
        <fullName evidence="1">Queuine tRNA-ribosyltransferase</fullName>
        <ecNumber evidence="1">2.4.2.29</ecNumber>
    </recommendedName>
    <alternativeName>
        <fullName evidence="1">Guanine insertion enzyme</fullName>
    </alternativeName>
    <alternativeName>
        <fullName evidence="1">tRNA-guanine transglycosylase</fullName>
    </alternativeName>
</protein>
<accession>Q31FZ5</accession>
<sequence>MKFELDKQDGRARRGRLIFKRGVVETPAFMPVGTYGSVKGMMPEEVADTGAQIILGNTFHLSIRPGTDIIEQHGDLHDFMNWKGPILTDSGGFQVFSLGKMRKITEEGVHFRNPVNGSKIFMGPEESMDVQRKLGSDIVMIFDECTPYPATHDVAADSMRLSLRWAERSKQAHGDNPSALFGIVQGGMYEDLRQESIKGLTDIGFDGYAIGGLSVGEPKEEMMGTLDFTEPHMPKDKPRYMMGVGKPEDIVEAVRRGIDMFDCVIPTRNARNGFLFTHSGVVKIRNAVNKTSLEPLDAKCDCYTCQNYTRAYLHHLDKCGEIQGARLNTIHNLHYYQLLMKGLREAIASETLDTFVSEFYQARGEDVPAL</sequence>
<gene>
    <name evidence="1" type="primary">tgt</name>
    <name type="ordered locus">Tcr_1333</name>
</gene>
<feature type="chain" id="PRO_1000198036" description="Queuine tRNA-ribosyltransferase">
    <location>
        <begin position="1"/>
        <end position="370"/>
    </location>
</feature>
<feature type="region of interest" description="RNA binding" evidence="1">
    <location>
        <begin position="243"/>
        <end position="249"/>
    </location>
</feature>
<feature type="region of interest" description="RNA binding; important for wobble base 34 recognition" evidence="1">
    <location>
        <begin position="267"/>
        <end position="271"/>
    </location>
</feature>
<feature type="active site" description="Proton acceptor" evidence="1">
    <location>
        <position position="89"/>
    </location>
</feature>
<feature type="active site" description="Nucleophile" evidence="1">
    <location>
        <position position="262"/>
    </location>
</feature>
<feature type="binding site" evidence="1">
    <location>
        <begin position="89"/>
        <end position="93"/>
    </location>
    <ligand>
        <name>substrate</name>
    </ligand>
</feature>
<feature type="binding site" evidence="1">
    <location>
        <position position="143"/>
    </location>
    <ligand>
        <name>substrate</name>
    </ligand>
</feature>
<feature type="binding site" evidence="1">
    <location>
        <position position="185"/>
    </location>
    <ligand>
        <name>substrate</name>
    </ligand>
</feature>
<feature type="binding site" evidence="1">
    <location>
        <position position="212"/>
    </location>
    <ligand>
        <name>substrate</name>
    </ligand>
</feature>
<feature type="binding site" evidence="1">
    <location>
        <position position="300"/>
    </location>
    <ligand>
        <name>Zn(2+)</name>
        <dbReference type="ChEBI" id="CHEBI:29105"/>
    </ligand>
</feature>
<feature type="binding site" evidence="1">
    <location>
        <position position="302"/>
    </location>
    <ligand>
        <name>Zn(2+)</name>
        <dbReference type="ChEBI" id="CHEBI:29105"/>
    </ligand>
</feature>
<feature type="binding site" evidence="1">
    <location>
        <position position="305"/>
    </location>
    <ligand>
        <name>Zn(2+)</name>
        <dbReference type="ChEBI" id="CHEBI:29105"/>
    </ligand>
</feature>
<feature type="binding site" evidence="1">
    <location>
        <position position="331"/>
    </location>
    <ligand>
        <name>Zn(2+)</name>
        <dbReference type="ChEBI" id="CHEBI:29105"/>
    </ligand>
</feature>
<proteinExistence type="inferred from homology"/>
<name>TGT_HYDCU</name>
<organism>
    <name type="scientific">Hydrogenovibrio crunogenus (strain DSM 25203 / XCL-2)</name>
    <name type="common">Thiomicrospira crunogena</name>
    <dbReference type="NCBI Taxonomy" id="317025"/>
    <lineage>
        <taxon>Bacteria</taxon>
        <taxon>Pseudomonadati</taxon>
        <taxon>Pseudomonadota</taxon>
        <taxon>Gammaproteobacteria</taxon>
        <taxon>Thiotrichales</taxon>
        <taxon>Piscirickettsiaceae</taxon>
        <taxon>Hydrogenovibrio</taxon>
    </lineage>
</organism>
<evidence type="ECO:0000255" key="1">
    <source>
        <dbReference type="HAMAP-Rule" id="MF_00168"/>
    </source>
</evidence>
<dbReference type="EC" id="2.4.2.29" evidence="1"/>
<dbReference type="EMBL" id="CP000109">
    <property type="protein sequence ID" value="ABB41928.1"/>
    <property type="molecule type" value="Genomic_DNA"/>
</dbReference>
<dbReference type="SMR" id="Q31FZ5"/>
<dbReference type="STRING" id="317025.Tcr_1333"/>
<dbReference type="KEGG" id="tcx:Tcr_1333"/>
<dbReference type="eggNOG" id="COG0343">
    <property type="taxonomic scope" value="Bacteria"/>
</dbReference>
<dbReference type="HOGENOM" id="CLU_022060_0_1_6"/>
<dbReference type="OrthoDB" id="9805417at2"/>
<dbReference type="UniPathway" id="UPA00392"/>
<dbReference type="GO" id="GO:0005829">
    <property type="term" value="C:cytosol"/>
    <property type="evidence" value="ECO:0007669"/>
    <property type="project" value="TreeGrafter"/>
</dbReference>
<dbReference type="GO" id="GO:0046872">
    <property type="term" value="F:metal ion binding"/>
    <property type="evidence" value="ECO:0007669"/>
    <property type="project" value="UniProtKB-KW"/>
</dbReference>
<dbReference type="GO" id="GO:0008479">
    <property type="term" value="F:tRNA-guanosine(34) queuine transglycosylase activity"/>
    <property type="evidence" value="ECO:0007669"/>
    <property type="project" value="UniProtKB-UniRule"/>
</dbReference>
<dbReference type="GO" id="GO:0008616">
    <property type="term" value="P:queuosine biosynthetic process"/>
    <property type="evidence" value="ECO:0007669"/>
    <property type="project" value="UniProtKB-UniRule"/>
</dbReference>
<dbReference type="GO" id="GO:0002099">
    <property type="term" value="P:tRNA wobble guanine modification"/>
    <property type="evidence" value="ECO:0007669"/>
    <property type="project" value="TreeGrafter"/>
</dbReference>
<dbReference type="GO" id="GO:0101030">
    <property type="term" value="P:tRNA-guanine transglycosylation"/>
    <property type="evidence" value="ECO:0007669"/>
    <property type="project" value="InterPro"/>
</dbReference>
<dbReference type="FunFam" id="3.20.20.105:FF:000001">
    <property type="entry name" value="Queuine tRNA-ribosyltransferase"/>
    <property type="match status" value="1"/>
</dbReference>
<dbReference type="Gene3D" id="3.20.20.105">
    <property type="entry name" value="Queuine tRNA-ribosyltransferase-like"/>
    <property type="match status" value="1"/>
</dbReference>
<dbReference type="HAMAP" id="MF_00168">
    <property type="entry name" value="Q_tRNA_Tgt"/>
    <property type="match status" value="1"/>
</dbReference>
<dbReference type="InterPro" id="IPR050076">
    <property type="entry name" value="ArchSynthase1/Queuine_TRR"/>
</dbReference>
<dbReference type="InterPro" id="IPR004803">
    <property type="entry name" value="TGT"/>
</dbReference>
<dbReference type="InterPro" id="IPR036511">
    <property type="entry name" value="TGT-like_sf"/>
</dbReference>
<dbReference type="InterPro" id="IPR002616">
    <property type="entry name" value="tRNA_ribo_trans-like"/>
</dbReference>
<dbReference type="NCBIfam" id="TIGR00430">
    <property type="entry name" value="Q_tRNA_tgt"/>
    <property type="match status" value="1"/>
</dbReference>
<dbReference type="NCBIfam" id="TIGR00449">
    <property type="entry name" value="tgt_general"/>
    <property type="match status" value="1"/>
</dbReference>
<dbReference type="PANTHER" id="PTHR46499">
    <property type="entry name" value="QUEUINE TRNA-RIBOSYLTRANSFERASE"/>
    <property type="match status" value="1"/>
</dbReference>
<dbReference type="PANTHER" id="PTHR46499:SF1">
    <property type="entry name" value="QUEUINE TRNA-RIBOSYLTRANSFERASE"/>
    <property type="match status" value="1"/>
</dbReference>
<dbReference type="Pfam" id="PF01702">
    <property type="entry name" value="TGT"/>
    <property type="match status" value="1"/>
</dbReference>
<dbReference type="SUPFAM" id="SSF51713">
    <property type="entry name" value="tRNA-guanine transglycosylase"/>
    <property type="match status" value="1"/>
</dbReference>